<feature type="chain" id="PRO_1000020557" description="Threonine--tRNA ligase">
    <location>
        <begin position="1"/>
        <end position="642"/>
    </location>
</feature>
<feature type="domain" description="TGS" evidence="2">
    <location>
        <begin position="1"/>
        <end position="61"/>
    </location>
</feature>
<feature type="region of interest" description="Catalytic" evidence="1">
    <location>
        <begin position="243"/>
        <end position="534"/>
    </location>
</feature>
<feature type="binding site" evidence="1">
    <location>
        <position position="334"/>
    </location>
    <ligand>
        <name>Zn(2+)</name>
        <dbReference type="ChEBI" id="CHEBI:29105"/>
    </ligand>
</feature>
<feature type="binding site" evidence="1">
    <location>
        <position position="385"/>
    </location>
    <ligand>
        <name>Zn(2+)</name>
        <dbReference type="ChEBI" id="CHEBI:29105"/>
    </ligand>
</feature>
<feature type="binding site" evidence="1">
    <location>
        <position position="511"/>
    </location>
    <ligand>
        <name>Zn(2+)</name>
        <dbReference type="ChEBI" id="CHEBI:29105"/>
    </ligand>
</feature>
<gene>
    <name evidence="1" type="primary">thrS</name>
    <name type="ordered locus">YPN_1888</name>
    <name type="ORF">YP516_2100</name>
</gene>
<accession>Q1CIG3</accession>
<accession>C4GTJ2</accession>
<reference key="1">
    <citation type="journal article" date="2006" name="J. Bacteriol.">
        <title>Complete genome sequence of Yersinia pestis strains Antiqua and Nepal516: evidence of gene reduction in an emerging pathogen.</title>
        <authorList>
            <person name="Chain P.S.G."/>
            <person name="Hu P."/>
            <person name="Malfatti S.A."/>
            <person name="Radnedge L."/>
            <person name="Larimer F."/>
            <person name="Vergez L.M."/>
            <person name="Worsham P."/>
            <person name="Chu M.C."/>
            <person name="Andersen G.L."/>
        </authorList>
    </citation>
    <scope>NUCLEOTIDE SEQUENCE [LARGE SCALE GENOMIC DNA]</scope>
    <source>
        <strain>Nepal516</strain>
    </source>
</reference>
<reference key="2">
    <citation type="submission" date="2009-04" db="EMBL/GenBank/DDBJ databases">
        <title>Yersinia pestis Nepal516A whole genome shotgun sequencing project.</title>
        <authorList>
            <person name="Plunkett G. III"/>
            <person name="Anderson B.D."/>
            <person name="Baumler D.J."/>
            <person name="Burland V."/>
            <person name="Cabot E.L."/>
            <person name="Glasner J.D."/>
            <person name="Mau B."/>
            <person name="Neeno-Eckwall E."/>
            <person name="Perna N.T."/>
            <person name="Munk A.C."/>
            <person name="Tapia R."/>
            <person name="Green L.D."/>
            <person name="Rogers Y.C."/>
            <person name="Detter J.C."/>
            <person name="Bruce D.C."/>
            <person name="Brettin T.S."/>
        </authorList>
    </citation>
    <scope>NUCLEOTIDE SEQUENCE [LARGE SCALE GENOMIC DNA]</scope>
    <source>
        <strain>Nepal516</strain>
    </source>
</reference>
<keyword id="KW-0030">Aminoacyl-tRNA synthetase</keyword>
<keyword id="KW-0067">ATP-binding</keyword>
<keyword id="KW-0963">Cytoplasm</keyword>
<keyword id="KW-0436">Ligase</keyword>
<keyword id="KW-0479">Metal-binding</keyword>
<keyword id="KW-0547">Nucleotide-binding</keyword>
<keyword id="KW-0648">Protein biosynthesis</keyword>
<keyword id="KW-0694">RNA-binding</keyword>
<keyword id="KW-0820">tRNA-binding</keyword>
<keyword id="KW-0862">Zinc</keyword>
<sequence>MPVITLPDGSQRHYDHAVSVLDVALDIGPGLAKACIAGRVNGELVDASDLIESDAQLAIITAKDAEGLEILRHSCAHLLGHAIKQLWPDTKMAIGPVIDNGFYYDVDIEHTLTQEDLALLEKRMHELADKDYDVIKKKVSWQEARDTFAARGEDYKVAILDENISRDDRPGLYHHEEYVDMCRGPHVPNMRFCHHFKLQKTSGAYWRGDSKNKMLQRIYGTAWGDKKQLNAYLQRLEEAAKRDHRKIGKQLDLYHMQEEAPGMVFWHNDGWTIFRELETFVRMKLKEYQYQEVKGPFMMDRVLWEKTGHWENYAEHMFTTSSENREYCIKPMNCPGHVQIFNQGLKSYRDLPLRMAEFGSCHRNEPSGALHGLMRVRGFTQDDAHVFCTEEQVRDEVNSCIKMVYDMYSTFGFEKIVVKLSTRPEKRIGSDELWTRAEDDLAAALTENGIPFDYQPGEGAFYGPKIEFTLHDCLDRAWQCGTVQLDFSLPGRLSASYIGENNDRQVPVMIHRAILGSMERFIGILTEEYAGFFPTWLAPVQVVVMNITDSQSDYVQQVTKKLQDAGIRAKADLRNEKIGFKIREHTLRRVPYMLVCGDKEVESGKIAVRTRRGKDLGSLDVNVVVDQLLAEIRSRSLHQLEE</sequence>
<proteinExistence type="inferred from homology"/>
<comment type="function">
    <text evidence="1">Catalyzes the attachment of threonine to tRNA(Thr) in a two-step reaction: L-threonine is first activated by ATP to form Thr-AMP and then transferred to the acceptor end of tRNA(Thr). Also edits incorrectly charged L-seryl-tRNA(Thr).</text>
</comment>
<comment type="catalytic activity">
    <reaction evidence="1">
        <text>tRNA(Thr) + L-threonine + ATP = L-threonyl-tRNA(Thr) + AMP + diphosphate + H(+)</text>
        <dbReference type="Rhea" id="RHEA:24624"/>
        <dbReference type="Rhea" id="RHEA-COMP:9670"/>
        <dbReference type="Rhea" id="RHEA-COMP:9704"/>
        <dbReference type="ChEBI" id="CHEBI:15378"/>
        <dbReference type="ChEBI" id="CHEBI:30616"/>
        <dbReference type="ChEBI" id="CHEBI:33019"/>
        <dbReference type="ChEBI" id="CHEBI:57926"/>
        <dbReference type="ChEBI" id="CHEBI:78442"/>
        <dbReference type="ChEBI" id="CHEBI:78534"/>
        <dbReference type="ChEBI" id="CHEBI:456215"/>
        <dbReference type="EC" id="6.1.1.3"/>
    </reaction>
</comment>
<comment type="cofactor">
    <cofactor evidence="1">
        <name>Zn(2+)</name>
        <dbReference type="ChEBI" id="CHEBI:29105"/>
    </cofactor>
    <text evidence="1">Binds 1 zinc ion per subunit.</text>
</comment>
<comment type="subunit">
    <text evidence="1">Homodimer.</text>
</comment>
<comment type="subcellular location">
    <subcellularLocation>
        <location evidence="1">Cytoplasm</location>
    </subcellularLocation>
</comment>
<comment type="similarity">
    <text evidence="1">Belongs to the class-II aminoacyl-tRNA synthetase family.</text>
</comment>
<name>SYT_YERPN</name>
<organism>
    <name type="scientific">Yersinia pestis bv. Antiqua (strain Nepal516)</name>
    <dbReference type="NCBI Taxonomy" id="377628"/>
    <lineage>
        <taxon>Bacteria</taxon>
        <taxon>Pseudomonadati</taxon>
        <taxon>Pseudomonadota</taxon>
        <taxon>Gammaproteobacteria</taxon>
        <taxon>Enterobacterales</taxon>
        <taxon>Yersiniaceae</taxon>
        <taxon>Yersinia</taxon>
    </lineage>
</organism>
<evidence type="ECO:0000255" key="1">
    <source>
        <dbReference type="HAMAP-Rule" id="MF_00184"/>
    </source>
</evidence>
<evidence type="ECO:0000255" key="2">
    <source>
        <dbReference type="PROSITE-ProRule" id="PRU01228"/>
    </source>
</evidence>
<protein>
    <recommendedName>
        <fullName evidence="1">Threonine--tRNA ligase</fullName>
        <ecNumber evidence="1">6.1.1.3</ecNumber>
    </recommendedName>
    <alternativeName>
        <fullName evidence="1">Threonyl-tRNA synthetase</fullName>
        <shortName evidence="1">ThrRS</shortName>
    </alternativeName>
</protein>
<dbReference type="EC" id="6.1.1.3" evidence="1"/>
<dbReference type="EMBL" id="CP000305">
    <property type="protein sequence ID" value="ABG18217.1"/>
    <property type="molecule type" value="Genomic_DNA"/>
</dbReference>
<dbReference type="EMBL" id="ACNQ01000010">
    <property type="protein sequence ID" value="EEO76793.1"/>
    <property type="molecule type" value="Genomic_DNA"/>
</dbReference>
<dbReference type="RefSeq" id="WP_002211836.1">
    <property type="nucleotide sequence ID" value="NZ_ACNQ01000010.1"/>
</dbReference>
<dbReference type="SMR" id="Q1CIG3"/>
<dbReference type="GeneID" id="57976245"/>
<dbReference type="KEGG" id="ypn:YPN_1888"/>
<dbReference type="HOGENOM" id="CLU_008554_0_1_6"/>
<dbReference type="Proteomes" id="UP000008936">
    <property type="component" value="Chromosome"/>
</dbReference>
<dbReference type="GO" id="GO:0005829">
    <property type="term" value="C:cytosol"/>
    <property type="evidence" value="ECO:0007669"/>
    <property type="project" value="TreeGrafter"/>
</dbReference>
<dbReference type="GO" id="GO:0005524">
    <property type="term" value="F:ATP binding"/>
    <property type="evidence" value="ECO:0007669"/>
    <property type="project" value="UniProtKB-UniRule"/>
</dbReference>
<dbReference type="GO" id="GO:0046872">
    <property type="term" value="F:metal ion binding"/>
    <property type="evidence" value="ECO:0007669"/>
    <property type="project" value="UniProtKB-KW"/>
</dbReference>
<dbReference type="GO" id="GO:0004829">
    <property type="term" value="F:threonine-tRNA ligase activity"/>
    <property type="evidence" value="ECO:0007669"/>
    <property type="project" value="UniProtKB-UniRule"/>
</dbReference>
<dbReference type="GO" id="GO:0000049">
    <property type="term" value="F:tRNA binding"/>
    <property type="evidence" value="ECO:0007669"/>
    <property type="project" value="UniProtKB-KW"/>
</dbReference>
<dbReference type="GO" id="GO:0006435">
    <property type="term" value="P:threonyl-tRNA aminoacylation"/>
    <property type="evidence" value="ECO:0007669"/>
    <property type="project" value="UniProtKB-UniRule"/>
</dbReference>
<dbReference type="CDD" id="cd01667">
    <property type="entry name" value="TGS_ThrRS"/>
    <property type="match status" value="1"/>
</dbReference>
<dbReference type="CDD" id="cd00860">
    <property type="entry name" value="ThrRS_anticodon"/>
    <property type="match status" value="1"/>
</dbReference>
<dbReference type="CDD" id="cd00771">
    <property type="entry name" value="ThrRS_core"/>
    <property type="match status" value="1"/>
</dbReference>
<dbReference type="FunFam" id="3.10.20.30:FF:000005">
    <property type="entry name" value="Threonine--tRNA ligase"/>
    <property type="match status" value="1"/>
</dbReference>
<dbReference type="FunFam" id="3.30.54.20:FF:000002">
    <property type="entry name" value="Threonine--tRNA ligase"/>
    <property type="match status" value="1"/>
</dbReference>
<dbReference type="FunFam" id="3.30.930.10:FF:000002">
    <property type="entry name" value="Threonine--tRNA ligase"/>
    <property type="match status" value="1"/>
</dbReference>
<dbReference type="FunFam" id="3.40.50.800:FF:000001">
    <property type="entry name" value="Threonine--tRNA ligase"/>
    <property type="match status" value="1"/>
</dbReference>
<dbReference type="FunFam" id="3.30.980.10:FF:000005">
    <property type="entry name" value="Threonyl-tRNA synthetase, mitochondrial"/>
    <property type="match status" value="1"/>
</dbReference>
<dbReference type="Gene3D" id="3.10.20.30">
    <property type="match status" value="1"/>
</dbReference>
<dbReference type="Gene3D" id="3.30.54.20">
    <property type="match status" value="1"/>
</dbReference>
<dbReference type="Gene3D" id="3.40.50.800">
    <property type="entry name" value="Anticodon-binding domain"/>
    <property type="match status" value="1"/>
</dbReference>
<dbReference type="Gene3D" id="3.30.930.10">
    <property type="entry name" value="Bira Bifunctional Protein, Domain 2"/>
    <property type="match status" value="1"/>
</dbReference>
<dbReference type="Gene3D" id="3.30.980.10">
    <property type="entry name" value="Threonyl-trna Synthetase, Chain A, domain 2"/>
    <property type="match status" value="1"/>
</dbReference>
<dbReference type="HAMAP" id="MF_00184">
    <property type="entry name" value="Thr_tRNA_synth"/>
    <property type="match status" value="1"/>
</dbReference>
<dbReference type="InterPro" id="IPR002314">
    <property type="entry name" value="aa-tRNA-synt_IIb"/>
</dbReference>
<dbReference type="InterPro" id="IPR006195">
    <property type="entry name" value="aa-tRNA-synth_II"/>
</dbReference>
<dbReference type="InterPro" id="IPR045864">
    <property type="entry name" value="aa-tRNA-synth_II/BPL/LPL"/>
</dbReference>
<dbReference type="InterPro" id="IPR004154">
    <property type="entry name" value="Anticodon-bd"/>
</dbReference>
<dbReference type="InterPro" id="IPR036621">
    <property type="entry name" value="Anticodon-bd_dom_sf"/>
</dbReference>
<dbReference type="InterPro" id="IPR012675">
    <property type="entry name" value="Beta-grasp_dom_sf"/>
</dbReference>
<dbReference type="InterPro" id="IPR004095">
    <property type="entry name" value="TGS"/>
</dbReference>
<dbReference type="InterPro" id="IPR012676">
    <property type="entry name" value="TGS-like"/>
</dbReference>
<dbReference type="InterPro" id="IPR002320">
    <property type="entry name" value="Thr-tRNA-ligase_IIa"/>
</dbReference>
<dbReference type="InterPro" id="IPR018163">
    <property type="entry name" value="Thr/Ala-tRNA-synth_IIc_edit"/>
</dbReference>
<dbReference type="InterPro" id="IPR047246">
    <property type="entry name" value="ThrRS_anticodon"/>
</dbReference>
<dbReference type="InterPro" id="IPR033728">
    <property type="entry name" value="ThrRS_core"/>
</dbReference>
<dbReference type="InterPro" id="IPR012947">
    <property type="entry name" value="tRNA_SAD"/>
</dbReference>
<dbReference type="NCBIfam" id="TIGR00418">
    <property type="entry name" value="thrS"/>
    <property type="match status" value="1"/>
</dbReference>
<dbReference type="PANTHER" id="PTHR11451:SF44">
    <property type="entry name" value="THREONINE--TRNA LIGASE, CHLOROPLASTIC_MITOCHONDRIAL 2"/>
    <property type="match status" value="1"/>
</dbReference>
<dbReference type="PANTHER" id="PTHR11451">
    <property type="entry name" value="THREONINE-TRNA LIGASE"/>
    <property type="match status" value="1"/>
</dbReference>
<dbReference type="Pfam" id="PF03129">
    <property type="entry name" value="HGTP_anticodon"/>
    <property type="match status" value="1"/>
</dbReference>
<dbReference type="Pfam" id="PF02824">
    <property type="entry name" value="TGS"/>
    <property type="match status" value="1"/>
</dbReference>
<dbReference type="Pfam" id="PF00587">
    <property type="entry name" value="tRNA-synt_2b"/>
    <property type="match status" value="1"/>
</dbReference>
<dbReference type="Pfam" id="PF07973">
    <property type="entry name" value="tRNA_SAD"/>
    <property type="match status" value="1"/>
</dbReference>
<dbReference type="PRINTS" id="PR01047">
    <property type="entry name" value="TRNASYNTHTHR"/>
</dbReference>
<dbReference type="SMART" id="SM00863">
    <property type="entry name" value="tRNA_SAD"/>
    <property type="match status" value="1"/>
</dbReference>
<dbReference type="SUPFAM" id="SSF52954">
    <property type="entry name" value="Class II aaRS ABD-related"/>
    <property type="match status" value="1"/>
</dbReference>
<dbReference type="SUPFAM" id="SSF55681">
    <property type="entry name" value="Class II aaRS and biotin synthetases"/>
    <property type="match status" value="1"/>
</dbReference>
<dbReference type="SUPFAM" id="SSF81271">
    <property type="entry name" value="TGS-like"/>
    <property type="match status" value="1"/>
</dbReference>
<dbReference type="SUPFAM" id="SSF55186">
    <property type="entry name" value="ThrRS/AlaRS common domain"/>
    <property type="match status" value="1"/>
</dbReference>
<dbReference type="PROSITE" id="PS50862">
    <property type="entry name" value="AA_TRNA_LIGASE_II"/>
    <property type="match status" value="1"/>
</dbReference>
<dbReference type="PROSITE" id="PS51880">
    <property type="entry name" value="TGS"/>
    <property type="match status" value="1"/>
</dbReference>